<organism>
    <name type="scientific">Cryptococcus neoformans var. neoformans serotype D (strain B-3501A)</name>
    <name type="common">Filobasidiella neoformans</name>
    <dbReference type="NCBI Taxonomy" id="283643"/>
    <lineage>
        <taxon>Eukaryota</taxon>
        <taxon>Fungi</taxon>
        <taxon>Dikarya</taxon>
        <taxon>Basidiomycota</taxon>
        <taxon>Agaricomycotina</taxon>
        <taxon>Tremellomycetes</taxon>
        <taxon>Tremellales</taxon>
        <taxon>Cryptococcaceae</taxon>
        <taxon>Cryptococcus</taxon>
        <taxon>Cryptococcus neoformans species complex</taxon>
    </lineage>
</organism>
<gene>
    <name type="primary">ADE2</name>
    <name type="ordered locus">CNBE2520</name>
</gene>
<feature type="chain" id="PRO_0000410228" description="Phosphoribosylaminoimidazole carboxylase">
    <location>
        <begin position="1"/>
        <end position="582"/>
    </location>
</feature>
<feature type="domain" description="ATP-grasp" evidence="1">
    <location>
        <begin position="114"/>
        <end position="305"/>
    </location>
</feature>
<feature type="binding site" evidence="1">
    <location>
        <begin position="143"/>
        <end position="200"/>
    </location>
    <ligand>
        <name>ATP</name>
        <dbReference type="ChEBI" id="CHEBI:30616"/>
    </ligand>
</feature>
<dbReference type="EC" id="4.1.1.21"/>
<dbReference type="EMBL" id="AF112302">
    <property type="protein sequence ID" value="AAC98316.1"/>
    <property type="molecule type" value="Genomic_DNA"/>
</dbReference>
<dbReference type="EMBL" id="AAEY01000024">
    <property type="protein sequence ID" value="EAL20891.1"/>
    <property type="molecule type" value="Genomic_DNA"/>
</dbReference>
<dbReference type="RefSeq" id="XP_775538.1">
    <property type="nucleotide sequence ID" value="XM_770445.1"/>
</dbReference>
<dbReference type="SMR" id="P0CQ37"/>
<dbReference type="GeneID" id="4936262"/>
<dbReference type="KEGG" id="cnb:CNBE2520"/>
<dbReference type="VEuPathDB" id="FungiDB:CNBE2520"/>
<dbReference type="HOGENOM" id="CLU_011534_2_1_1"/>
<dbReference type="OrthoDB" id="5288at5206"/>
<dbReference type="UniPathway" id="UPA00074">
    <property type="reaction ID" value="UER00130"/>
</dbReference>
<dbReference type="GO" id="GO:0005524">
    <property type="term" value="F:ATP binding"/>
    <property type="evidence" value="ECO:0007669"/>
    <property type="project" value="UniProtKB-KW"/>
</dbReference>
<dbReference type="GO" id="GO:0046872">
    <property type="term" value="F:metal ion binding"/>
    <property type="evidence" value="ECO:0007669"/>
    <property type="project" value="InterPro"/>
</dbReference>
<dbReference type="GO" id="GO:0004638">
    <property type="term" value="F:phosphoribosylaminoimidazole carboxylase activity"/>
    <property type="evidence" value="ECO:0007669"/>
    <property type="project" value="UniProtKB-EC"/>
</dbReference>
<dbReference type="GO" id="GO:0006189">
    <property type="term" value="P:'de novo' IMP biosynthetic process"/>
    <property type="evidence" value="ECO:0007669"/>
    <property type="project" value="UniProtKB-UniPathway"/>
</dbReference>
<dbReference type="FunFam" id="3.40.50.1970:FF:000013">
    <property type="entry name" value="Phosphoribosylaminoimidazole carboxylase"/>
    <property type="match status" value="1"/>
</dbReference>
<dbReference type="FunFam" id="3.30.470.20:FF:000037">
    <property type="entry name" value="Phosphoribosylaminoimidazole carboxylase, chloroplastic"/>
    <property type="match status" value="1"/>
</dbReference>
<dbReference type="Gene3D" id="3.40.50.1970">
    <property type="match status" value="1"/>
</dbReference>
<dbReference type="Gene3D" id="3.40.50.20">
    <property type="match status" value="1"/>
</dbReference>
<dbReference type="Gene3D" id="3.30.1490.20">
    <property type="entry name" value="ATP-grasp fold, A domain"/>
    <property type="match status" value="1"/>
</dbReference>
<dbReference type="Gene3D" id="3.30.470.20">
    <property type="entry name" value="ATP-grasp fold, B domain"/>
    <property type="match status" value="1"/>
</dbReference>
<dbReference type="HAMAP" id="MF_01929">
    <property type="entry name" value="PurE_classI"/>
    <property type="match status" value="1"/>
</dbReference>
<dbReference type="HAMAP" id="MF_01928">
    <property type="entry name" value="PurK"/>
    <property type="match status" value="1"/>
</dbReference>
<dbReference type="InterPro" id="IPR016301">
    <property type="entry name" value="Ade2_fungi/plant"/>
</dbReference>
<dbReference type="InterPro" id="IPR011761">
    <property type="entry name" value="ATP-grasp"/>
</dbReference>
<dbReference type="InterPro" id="IPR003135">
    <property type="entry name" value="ATP-grasp_carboxylate-amine"/>
</dbReference>
<dbReference type="InterPro" id="IPR013815">
    <property type="entry name" value="ATP_grasp_subdomain_1"/>
</dbReference>
<dbReference type="InterPro" id="IPR016185">
    <property type="entry name" value="PreATP-grasp_dom_sf"/>
</dbReference>
<dbReference type="InterPro" id="IPR033747">
    <property type="entry name" value="PurE_ClassI"/>
</dbReference>
<dbReference type="InterPro" id="IPR000031">
    <property type="entry name" value="PurE_dom"/>
</dbReference>
<dbReference type="InterPro" id="IPR005875">
    <property type="entry name" value="PurK"/>
</dbReference>
<dbReference type="InterPro" id="IPR040686">
    <property type="entry name" value="PurK_C"/>
</dbReference>
<dbReference type="InterPro" id="IPR054350">
    <property type="entry name" value="PurT/PurK_preATP-grasp"/>
</dbReference>
<dbReference type="InterPro" id="IPR011054">
    <property type="entry name" value="Rudment_hybrid_motif"/>
</dbReference>
<dbReference type="NCBIfam" id="NF004679">
    <property type="entry name" value="PRK06019.1-5"/>
    <property type="match status" value="1"/>
</dbReference>
<dbReference type="NCBIfam" id="TIGR01162">
    <property type="entry name" value="purE"/>
    <property type="match status" value="1"/>
</dbReference>
<dbReference type="NCBIfam" id="TIGR01161">
    <property type="entry name" value="purK"/>
    <property type="match status" value="1"/>
</dbReference>
<dbReference type="PANTHER" id="PTHR11609:SF5">
    <property type="entry name" value="PHOSPHORIBOSYLAMINOIMIDAZOLE CARBOXYLASE"/>
    <property type="match status" value="1"/>
</dbReference>
<dbReference type="PANTHER" id="PTHR11609">
    <property type="entry name" value="PURINE BIOSYNTHESIS PROTEIN 6/7, PUR6/7"/>
    <property type="match status" value="1"/>
</dbReference>
<dbReference type="Pfam" id="PF00731">
    <property type="entry name" value="AIRC"/>
    <property type="match status" value="1"/>
</dbReference>
<dbReference type="Pfam" id="PF02222">
    <property type="entry name" value="ATP-grasp"/>
    <property type="match status" value="1"/>
</dbReference>
<dbReference type="Pfam" id="PF17769">
    <property type="entry name" value="PurK_C"/>
    <property type="match status" value="1"/>
</dbReference>
<dbReference type="Pfam" id="PF22660">
    <property type="entry name" value="RS_preATP-grasp-like"/>
    <property type="match status" value="1"/>
</dbReference>
<dbReference type="PIRSF" id="PIRSF001340">
    <property type="entry name" value="AIR_carboxylase"/>
    <property type="match status" value="1"/>
</dbReference>
<dbReference type="SMART" id="SM01001">
    <property type="entry name" value="AIRC"/>
    <property type="match status" value="1"/>
</dbReference>
<dbReference type="SUPFAM" id="SSF56059">
    <property type="entry name" value="Glutathione synthetase ATP-binding domain-like"/>
    <property type="match status" value="1"/>
</dbReference>
<dbReference type="SUPFAM" id="SSF52255">
    <property type="entry name" value="N5-CAIR mutase (phosphoribosylaminoimidazole carboxylase, PurE)"/>
    <property type="match status" value="1"/>
</dbReference>
<dbReference type="SUPFAM" id="SSF52440">
    <property type="entry name" value="PreATP-grasp domain"/>
    <property type="match status" value="1"/>
</dbReference>
<dbReference type="SUPFAM" id="SSF51246">
    <property type="entry name" value="Rudiment single hybrid motif"/>
    <property type="match status" value="1"/>
</dbReference>
<dbReference type="PROSITE" id="PS50975">
    <property type="entry name" value="ATP_GRASP"/>
    <property type="match status" value="1"/>
</dbReference>
<protein>
    <recommendedName>
        <fullName>Phosphoribosylaminoimidazole carboxylase</fullName>
        <ecNumber>4.1.1.21</ecNumber>
    </recommendedName>
    <alternativeName>
        <fullName>AIR carboxylase</fullName>
        <shortName>AIRC</shortName>
    </alternativeName>
</protein>
<accession>P0CQ37</accession>
<accession>O93936</accession>
<accession>Q55SD0</accession>
<accession>Q5KGS6</accession>
<accession>Q92233</accession>
<sequence length="582" mass="62447">MAPRKTVGILGGGQLGRMLTHPAALLGIPLLILDSGSYTPAKQTLLPPPPHSHPDGPFTSETHIRKLASACDILTVEIEHVNADVLEAVEKEGLCEVQPSPKTIRLIQNKYDQKKYLAERGVAVAPFEELPANPTEEDFKAIAGRLGLPLMLKAKTLAYDGRGNSPLKSASSEDIQASLKFLGDRPLYAEGWAPFVKEVAVMVVRNKEGEVQSYDAVETIHRESILRVCLTPLRGEKGVNQRARELAEKAVGHLEGAGIFGVEMFLMPDGELLLNEIAPRPHNSGHHTIEACLTSQFENHLRAILSLPLGSTALRVPSAAMVNILGASSTMDAIDKMADNALTVPGAAVHLYGKAESRKARKMGHITVTAESDAELNERLRALLFAQPDAHADWIDLIAPPSPAPAHSHAKPLVGIIMGSDSDLPVMHPATKILEKFGVPYELTITSAHRTPERMVKYAKTAADRGLRAIIAGAGGAAHLPGMVASETSLPVIGVPVKASVLDGVDSLYSIVQMPRGIPCATVGINNSTNAALLAVRILGTSVPALNKATEEYSKALEEEVLAKVDILEEEGWDKYIERLKK</sequence>
<comment type="catalytic activity">
    <reaction>
        <text>5-amino-1-(5-phospho-D-ribosyl)imidazole-4-carboxylate + H(+) = 5-amino-1-(5-phospho-beta-D-ribosyl)imidazole + CO2</text>
        <dbReference type="Rhea" id="RHEA:10792"/>
        <dbReference type="ChEBI" id="CHEBI:15378"/>
        <dbReference type="ChEBI" id="CHEBI:16526"/>
        <dbReference type="ChEBI" id="CHEBI:77657"/>
        <dbReference type="ChEBI" id="CHEBI:137981"/>
        <dbReference type="EC" id="4.1.1.21"/>
    </reaction>
</comment>
<comment type="pathway">
    <text>Purine metabolism; IMP biosynthesis via de novo pathway; 5-amino-1-(5-phospho-D-ribosyl)imidazole-4-carboxylate from 5-amino-1-(5-phospho-D-ribosyl)imidazole (carboxylase route): step 1/1.</text>
</comment>
<comment type="similarity">
    <text evidence="2">In the C-terminal section; belongs to the AIR carboxylase family. Class I subfamily.</text>
</comment>
<proteinExistence type="inferred from homology"/>
<name>PUR6_CRYNB</name>
<keyword id="KW-0067">ATP-binding</keyword>
<keyword id="KW-0210">Decarboxylase</keyword>
<keyword id="KW-0456">Lyase</keyword>
<keyword id="KW-0547">Nucleotide-binding</keyword>
<keyword id="KW-0658">Purine biosynthesis</keyword>
<evidence type="ECO:0000255" key="1">
    <source>
        <dbReference type="PROSITE-ProRule" id="PRU00409"/>
    </source>
</evidence>
<evidence type="ECO:0000305" key="2"/>
<reference key="1">
    <citation type="journal article" date="1999" name="Fungal Genet. Biol.">
        <title>Molecular analysis of the Cryptococcus neoformans ADE2 gene, a selectable marker for transformation and gene disruption.</title>
        <authorList>
            <person name="Sudarshan S."/>
            <person name="Davidson R.C."/>
            <person name="Heitman J."/>
            <person name="Alspaugh J.A."/>
        </authorList>
    </citation>
    <scope>NUCLEOTIDE SEQUENCE [GENOMIC DNA]</scope>
    <source>
        <strain>B-3501</strain>
    </source>
</reference>
<reference key="2">
    <citation type="journal article" date="2005" name="Science">
        <title>The genome of the basidiomycetous yeast and human pathogen Cryptococcus neoformans.</title>
        <authorList>
            <person name="Loftus B.J."/>
            <person name="Fung E."/>
            <person name="Roncaglia P."/>
            <person name="Rowley D."/>
            <person name="Amedeo P."/>
            <person name="Bruno D."/>
            <person name="Vamathevan J."/>
            <person name="Miranda M."/>
            <person name="Anderson I.J."/>
            <person name="Fraser J.A."/>
            <person name="Allen J.E."/>
            <person name="Bosdet I.E."/>
            <person name="Brent M.R."/>
            <person name="Chiu R."/>
            <person name="Doering T.L."/>
            <person name="Donlin M.J."/>
            <person name="D'Souza C.A."/>
            <person name="Fox D.S."/>
            <person name="Grinberg V."/>
            <person name="Fu J."/>
            <person name="Fukushima M."/>
            <person name="Haas B.J."/>
            <person name="Huang J.C."/>
            <person name="Janbon G."/>
            <person name="Jones S.J.M."/>
            <person name="Koo H.L."/>
            <person name="Krzywinski M.I."/>
            <person name="Kwon-Chung K.J."/>
            <person name="Lengeler K.B."/>
            <person name="Maiti R."/>
            <person name="Marra M.A."/>
            <person name="Marra R.E."/>
            <person name="Mathewson C.A."/>
            <person name="Mitchell T.G."/>
            <person name="Pertea M."/>
            <person name="Riggs F.R."/>
            <person name="Salzberg S.L."/>
            <person name="Schein J.E."/>
            <person name="Shvartsbeyn A."/>
            <person name="Shin H."/>
            <person name="Shumway M."/>
            <person name="Specht C.A."/>
            <person name="Suh B.B."/>
            <person name="Tenney A."/>
            <person name="Utterback T.R."/>
            <person name="Wickes B.L."/>
            <person name="Wortman J.R."/>
            <person name="Wye N.H."/>
            <person name="Kronstad J.W."/>
            <person name="Lodge J.K."/>
            <person name="Heitman J."/>
            <person name="Davis R.W."/>
            <person name="Fraser C.M."/>
            <person name="Hyman R.W."/>
        </authorList>
    </citation>
    <scope>NUCLEOTIDE SEQUENCE [LARGE SCALE GENOMIC DNA]</scope>
    <source>
        <strain>B-3501A</strain>
    </source>
</reference>